<proteinExistence type="inferred from homology"/>
<accession>B7IUK0</accession>
<dbReference type="EC" id="2.1.1.228" evidence="1"/>
<dbReference type="EMBL" id="CP001186">
    <property type="protein sequence ID" value="ACK96379.1"/>
    <property type="molecule type" value="Genomic_DNA"/>
</dbReference>
<dbReference type="RefSeq" id="WP_000686901.1">
    <property type="nucleotide sequence ID" value="NC_011772.1"/>
</dbReference>
<dbReference type="SMR" id="B7IUK0"/>
<dbReference type="KEGG" id="bcg:BCG9842_B1303"/>
<dbReference type="HOGENOM" id="CLU_047363_0_1_9"/>
<dbReference type="Proteomes" id="UP000006744">
    <property type="component" value="Chromosome"/>
</dbReference>
<dbReference type="GO" id="GO:0005829">
    <property type="term" value="C:cytosol"/>
    <property type="evidence" value="ECO:0007669"/>
    <property type="project" value="TreeGrafter"/>
</dbReference>
<dbReference type="GO" id="GO:0052906">
    <property type="term" value="F:tRNA (guanine(37)-N1)-methyltransferase activity"/>
    <property type="evidence" value="ECO:0007669"/>
    <property type="project" value="UniProtKB-UniRule"/>
</dbReference>
<dbReference type="GO" id="GO:0002939">
    <property type="term" value="P:tRNA N1-guanine methylation"/>
    <property type="evidence" value="ECO:0007669"/>
    <property type="project" value="TreeGrafter"/>
</dbReference>
<dbReference type="CDD" id="cd18080">
    <property type="entry name" value="TrmD-like"/>
    <property type="match status" value="1"/>
</dbReference>
<dbReference type="FunFam" id="1.10.1270.20:FF:000001">
    <property type="entry name" value="tRNA (guanine-N(1)-)-methyltransferase"/>
    <property type="match status" value="1"/>
</dbReference>
<dbReference type="FunFam" id="3.40.1280.10:FF:000001">
    <property type="entry name" value="tRNA (guanine-N(1)-)-methyltransferase"/>
    <property type="match status" value="1"/>
</dbReference>
<dbReference type="Gene3D" id="3.40.1280.10">
    <property type="match status" value="1"/>
</dbReference>
<dbReference type="Gene3D" id="1.10.1270.20">
    <property type="entry name" value="tRNA(m1g37)methyltransferase, domain 2"/>
    <property type="match status" value="1"/>
</dbReference>
<dbReference type="HAMAP" id="MF_00605">
    <property type="entry name" value="TrmD"/>
    <property type="match status" value="1"/>
</dbReference>
<dbReference type="InterPro" id="IPR029028">
    <property type="entry name" value="Alpha/beta_knot_MTases"/>
</dbReference>
<dbReference type="InterPro" id="IPR023148">
    <property type="entry name" value="tRNA_m1G_MeTrfase_C_sf"/>
</dbReference>
<dbReference type="InterPro" id="IPR002649">
    <property type="entry name" value="tRNA_m1G_MeTrfase_TrmD"/>
</dbReference>
<dbReference type="InterPro" id="IPR029026">
    <property type="entry name" value="tRNA_m1G_MTases_N"/>
</dbReference>
<dbReference type="InterPro" id="IPR016009">
    <property type="entry name" value="tRNA_MeTrfase_TRMD/TRM10"/>
</dbReference>
<dbReference type="NCBIfam" id="NF000648">
    <property type="entry name" value="PRK00026.1"/>
    <property type="match status" value="1"/>
</dbReference>
<dbReference type="NCBIfam" id="TIGR00088">
    <property type="entry name" value="trmD"/>
    <property type="match status" value="1"/>
</dbReference>
<dbReference type="PANTHER" id="PTHR46417">
    <property type="entry name" value="TRNA (GUANINE-N(1)-)-METHYLTRANSFERASE"/>
    <property type="match status" value="1"/>
</dbReference>
<dbReference type="PANTHER" id="PTHR46417:SF1">
    <property type="entry name" value="TRNA (GUANINE-N(1)-)-METHYLTRANSFERASE"/>
    <property type="match status" value="1"/>
</dbReference>
<dbReference type="Pfam" id="PF01746">
    <property type="entry name" value="tRNA_m1G_MT"/>
    <property type="match status" value="1"/>
</dbReference>
<dbReference type="PIRSF" id="PIRSF000386">
    <property type="entry name" value="tRNA_mtase"/>
    <property type="match status" value="1"/>
</dbReference>
<dbReference type="SUPFAM" id="SSF75217">
    <property type="entry name" value="alpha/beta knot"/>
    <property type="match status" value="1"/>
</dbReference>
<sequence length="244" mass="27938">MKIDILTLFPDMFTGVFGSSILKKAQEKEAVNLRVVNFRDYTTSKHNSVDDYPYGGGAGMVLTPQPIFDAVEDLTKETERKPRVVLMCPQGERFTQKKAEELAGEEHLIFVCGHYEGYDERIREHLVTDEISIGDYVLTGGELASMVITDSVVRLLPGVLGNHASQVEDSFSTGLLEHPHYTRPADFRGMKVPDVLMSGNHKNIDEWRHKESLRRTYTRRPDLLDDRDLSKQEKKWLEEIKREQ</sequence>
<gene>
    <name evidence="1" type="primary">trmD</name>
    <name type="ordered locus">BCG9842_B1303</name>
</gene>
<name>TRMD_BACC2</name>
<reference key="1">
    <citation type="submission" date="2008-10" db="EMBL/GenBank/DDBJ databases">
        <title>Genome sequence of Bacillus cereus G9842.</title>
        <authorList>
            <person name="Dodson R.J."/>
            <person name="Durkin A.S."/>
            <person name="Rosovitz M.J."/>
            <person name="Rasko D.A."/>
            <person name="Hoffmaster A."/>
            <person name="Ravel J."/>
            <person name="Sutton G."/>
        </authorList>
    </citation>
    <scope>NUCLEOTIDE SEQUENCE [LARGE SCALE GENOMIC DNA]</scope>
    <source>
        <strain>G9842</strain>
    </source>
</reference>
<protein>
    <recommendedName>
        <fullName evidence="1">tRNA (guanine-N(1)-)-methyltransferase</fullName>
        <ecNumber evidence="1">2.1.1.228</ecNumber>
    </recommendedName>
    <alternativeName>
        <fullName evidence="1">M1G-methyltransferase</fullName>
    </alternativeName>
    <alternativeName>
        <fullName evidence="1">tRNA [GM37] methyltransferase</fullName>
    </alternativeName>
</protein>
<comment type="function">
    <text evidence="1">Specifically methylates guanosine-37 in various tRNAs.</text>
</comment>
<comment type="catalytic activity">
    <reaction evidence="1">
        <text>guanosine(37) in tRNA + S-adenosyl-L-methionine = N(1)-methylguanosine(37) in tRNA + S-adenosyl-L-homocysteine + H(+)</text>
        <dbReference type="Rhea" id="RHEA:36899"/>
        <dbReference type="Rhea" id="RHEA-COMP:10145"/>
        <dbReference type="Rhea" id="RHEA-COMP:10147"/>
        <dbReference type="ChEBI" id="CHEBI:15378"/>
        <dbReference type="ChEBI" id="CHEBI:57856"/>
        <dbReference type="ChEBI" id="CHEBI:59789"/>
        <dbReference type="ChEBI" id="CHEBI:73542"/>
        <dbReference type="ChEBI" id="CHEBI:74269"/>
        <dbReference type="EC" id="2.1.1.228"/>
    </reaction>
</comment>
<comment type="subunit">
    <text evidence="1">Homodimer.</text>
</comment>
<comment type="subcellular location">
    <subcellularLocation>
        <location evidence="1">Cytoplasm</location>
    </subcellularLocation>
</comment>
<comment type="similarity">
    <text evidence="1">Belongs to the RNA methyltransferase TrmD family.</text>
</comment>
<evidence type="ECO:0000255" key="1">
    <source>
        <dbReference type="HAMAP-Rule" id="MF_00605"/>
    </source>
</evidence>
<feature type="chain" id="PRO_1000130132" description="tRNA (guanine-N(1)-)-methyltransferase">
    <location>
        <begin position="1"/>
        <end position="244"/>
    </location>
</feature>
<feature type="binding site" evidence="1">
    <location>
        <position position="113"/>
    </location>
    <ligand>
        <name>S-adenosyl-L-methionine</name>
        <dbReference type="ChEBI" id="CHEBI:59789"/>
    </ligand>
</feature>
<feature type="binding site" evidence="1">
    <location>
        <begin position="133"/>
        <end position="138"/>
    </location>
    <ligand>
        <name>S-adenosyl-L-methionine</name>
        <dbReference type="ChEBI" id="CHEBI:59789"/>
    </ligand>
</feature>
<keyword id="KW-0963">Cytoplasm</keyword>
<keyword id="KW-0489">Methyltransferase</keyword>
<keyword id="KW-0949">S-adenosyl-L-methionine</keyword>
<keyword id="KW-0808">Transferase</keyword>
<keyword id="KW-0819">tRNA processing</keyword>
<organism>
    <name type="scientific">Bacillus cereus (strain G9842)</name>
    <dbReference type="NCBI Taxonomy" id="405531"/>
    <lineage>
        <taxon>Bacteria</taxon>
        <taxon>Bacillati</taxon>
        <taxon>Bacillota</taxon>
        <taxon>Bacilli</taxon>
        <taxon>Bacillales</taxon>
        <taxon>Bacillaceae</taxon>
        <taxon>Bacillus</taxon>
        <taxon>Bacillus cereus group</taxon>
    </lineage>
</organism>